<comment type="function">
    <text evidence="2">Cell wall formation.</text>
</comment>
<comment type="catalytic activity">
    <reaction evidence="2">
        <text>2 D-alanine + ATP = D-alanyl-D-alanine + ADP + phosphate + H(+)</text>
        <dbReference type="Rhea" id="RHEA:11224"/>
        <dbReference type="ChEBI" id="CHEBI:15378"/>
        <dbReference type="ChEBI" id="CHEBI:30616"/>
        <dbReference type="ChEBI" id="CHEBI:43474"/>
        <dbReference type="ChEBI" id="CHEBI:57416"/>
        <dbReference type="ChEBI" id="CHEBI:57822"/>
        <dbReference type="ChEBI" id="CHEBI:456216"/>
        <dbReference type="EC" id="6.3.2.4"/>
    </reaction>
</comment>
<comment type="cofactor">
    <cofactor evidence="1">
        <name>Mg(2+)</name>
        <dbReference type="ChEBI" id="CHEBI:18420"/>
    </cofactor>
    <cofactor evidence="1">
        <name>Mn(2+)</name>
        <dbReference type="ChEBI" id="CHEBI:29035"/>
    </cofactor>
    <text evidence="1">Binds 2 magnesium or manganese ions per subunit.</text>
</comment>
<comment type="pathway">
    <text evidence="2">Cell wall biogenesis; peptidoglycan biosynthesis.</text>
</comment>
<comment type="subcellular location">
    <subcellularLocation>
        <location evidence="2">Cytoplasm</location>
    </subcellularLocation>
</comment>
<comment type="similarity">
    <text evidence="2">Belongs to the D-alanine--D-alanine ligase family.</text>
</comment>
<name>DDL_STAAC</name>
<dbReference type="EC" id="6.3.2.4" evidence="2"/>
<dbReference type="EMBL" id="CP000046">
    <property type="protein sequence ID" value="AAW37036.1"/>
    <property type="molecule type" value="Genomic_DNA"/>
</dbReference>
<dbReference type="RefSeq" id="WP_000159631.1">
    <property type="nucleotide sequence ID" value="NZ_JBGOFO010000007.1"/>
</dbReference>
<dbReference type="PDB" id="2I80">
    <property type="method" value="X-ray"/>
    <property type="resolution" value="2.19 A"/>
    <property type="chains" value="A/B=1-356"/>
</dbReference>
<dbReference type="PDB" id="2I87">
    <property type="method" value="X-ray"/>
    <property type="resolution" value="2.00 A"/>
    <property type="chains" value="A/B=1-356"/>
</dbReference>
<dbReference type="PDB" id="2I8C">
    <property type="method" value="X-ray"/>
    <property type="resolution" value="2.46 A"/>
    <property type="chains" value="A/B=1-356"/>
</dbReference>
<dbReference type="PDB" id="3N8D">
    <property type="method" value="X-ray"/>
    <property type="resolution" value="2.30 A"/>
    <property type="chains" value="A/B=1-356"/>
</dbReference>
<dbReference type="PDBsum" id="2I80"/>
<dbReference type="PDBsum" id="2I87"/>
<dbReference type="PDBsum" id="2I8C"/>
<dbReference type="PDBsum" id="3N8D"/>
<dbReference type="SMR" id="Q5HEB7"/>
<dbReference type="DrugBank" id="DB07805">
    <property type="generic name" value="3-CHLORO-2,2-DIMETHYL-N-[4-(TRIFLUOROMETHYL)PHENYL]PROPANAMIDE"/>
</dbReference>
<dbReference type="KEGG" id="sac:SACOL2074"/>
<dbReference type="HOGENOM" id="CLU_039268_0_0_9"/>
<dbReference type="BioCyc" id="MetaCyc:MONOMER-15463"/>
<dbReference type="BRENDA" id="6.3.2.4">
    <property type="organism ID" value="3352"/>
</dbReference>
<dbReference type="UniPathway" id="UPA00219"/>
<dbReference type="EvolutionaryTrace" id="Q5HEB7"/>
<dbReference type="Proteomes" id="UP000000530">
    <property type="component" value="Chromosome"/>
</dbReference>
<dbReference type="GO" id="GO:0005829">
    <property type="term" value="C:cytosol"/>
    <property type="evidence" value="ECO:0007669"/>
    <property type="project" value="TreeGrafter"/>
</dbReference>
<dbReference type="GO" id="GO:0005524">
    <property type="term" value="F:ATP binding"/>
    <property type="evidence" value="ECO:0007669"/>
    <property type="project" value="UniProtKB-KW"/>
</dbReference>
<dbReference type="GO" id="GO:0008716">
    <property type="term" value="F:D-alanine-D-alanine ligase activity"/>
    <property type="evidence" value="ECO:0007669"/>
    <property type="project" value="UniProtKB-UniRule"/>
</dbReference>
<dbReference type="GO" id="GO:0046872">
    <property type="term" value="F:metal ion binding"/>
    <property type="evidence" value="ECO:0007669"/>
    <property type="project" value="UniProtKB-KW"/>
</dbReference>
<dbReference type="GO" id="GO:0071555">
    <property type="term" value="P:cell wall organization"/>
    <property type="evidence" value="ECO:0007669"/>
    <property type="project" value="UniProtKB-KW"/>
</dbReference>
<dbReference type="GO" id="GO:0009252">
    <property type="term" value="P:peptidoglycan biosynthetic process"/>
    <property type="evidence" value="ECO:0007669"/>
    <property type="project" value="UniProtKB-UniRule"/>
</dbReference>
<dbReference type="GO" id="GO:0008360">
    <property type="term" value="P:regulation of cell shape"/>
    <property type="evidence" value="ECO:0007669"/>
    <property type="project" value="UniProtKB-KW"/>
</dbReference>
<dbReference type="FunFam" id="3.30.1490.20:FF:000007">
    <property type="entry name" value="D-alanine--D-alanine ligase"/>
    <property type="match status" value="1"/>
</dbReference>
<dbReference type="FunFam" id="3.30.470.20:FF:000008">
    <property type="entry name" value="D-alanine--D-alanine ligase"/>
    <property type="match status" value="1"/>
</dbReference>
<dbReference type="FunFam" id="3.40.50.20:FF:000020">
    <property type="entry name" value="D-alanine--D-alanine ligase"/>
    <property type="match status" value="1"/>
</dbReference>
<dbReference type="Gene3D" id="3.40.50.20">
    <property type="match status" value="1"/>
</dbReference>
<dbReference type="Gene3D" id="3.30.1490.20">
    <property type="entry name" value="ATP-grasp fold, A domain"/>
    <property type="match status" value="1"/>
</dbReference>
<dbReference type="Gene3D" id="3.30.470.20">
    <property type="entry name" value="ATP-grasp fold, B domain"/>
    <property type="match status" value="1"/>
</dbReference>
<dbReference type="HAMAP" id="MF_00047">
    <property type="entry name" value="Dala_Dala_lig"/>
    <property type="match status" value="1"/>
</dbReference>
<dbReference type="InterPro" id="IPR011761">
    <property type="entry name" value="ATP-grasp"/>
</dbReference>
<dbReference type="InterPro" id="IPR013815">
    <property type="entry name" value="ATP_grasp_subdomain_1"/>
</dbReference>
<dbReference type="InterPro" id="IPR000291">
    <property type="entry name" value="D-Ala_lig_Van_CS"/>
</dbReference>
<dbReference type="InterPro" id="IPR005905">
    <property type="entry name" value="D_ala_D_ala"/>
</dbReference>
<dbReference type="InterPro" id="IPR011095">
    <property type="entry name" value="Dala_Dala_lig_C"/>
</dbReference>
<dbReference type="InterPro" id="IPR011127">
    <property type="entry name" value="Dala_Dala_lig_N"/>
</dbReference>
<dbReference type="InterPro" id="IPR016185">
    <property type="entry name" value="PreATP-grasp_dom_sf"/>
</dbReference>
<dbReference type="NCBIfam" id="TIGR01205">
    <property type="entry name" value="D_ala_D_alaTIGR"/>
    <property type="match status" value="1"/>
</dbReference>
<dbReference type="NCBIfam" id="NF002526">
    <property type="entry name" value="PRK01966.1-2"/>
    <property type="match status" value="1"/>
</dbReference>
<dbReference type="NCBIfam" id="NF002528">
    <property type="entry name" value="PRK01966.1-4"/>
    <property type="match status" value="1"/>
</dbReference>
<dbReference type="PANTHER" id="PTHR23132">
    <property type="entry name" value="D-ALANINE--D-ALANINE LIGASE"/>
    <property type="match status" value="1"/>
</dbReference>
<dbReference type="PANTHER" id="PTHR23132:SF25">
    <property type="entry name" value="D-ALANINE--D-ALANINE LIGASE A"/>
    <property type="match status" value="1"/>
</dbReference>
<dbReference type="Pfam" id="PF07478">
    <property type="entry name" value="Dala_Dala_lig_C"/>
    <property type="match status" value="1"/>
</dbReference>
<dbReference type="Pfam" id="PF01820">
    <property type="entry name" value="Dala_Dala_lig_N"/>
    <property type="match status" value="1"/>
</dbReference>
<dbReference type="PIRSF" id="PIRSF039102">
    <property type="entry name" value="Ddl/VanB"/>
    <property type="match status" value="1"/>
</dbReference>
<dbReference type="SUPFAM" id="SSF56059">
    <property type="entry name" value="Glutathione synthetase ATP-binding domain-like"/>
    <property type="match status" value="1"/>
</dbReference>
<dbReference type="SUPFAM" id="SSF52440">
    <property type="entry name" value="PreATP-grasp domain"/>
    <property type="match status" value="1"/>
</dbReference>
<dbReference type="PROSITE" id="PS50975">
    <property type="entry name" value="ATP_GRASP"/>
    <property type="match status" value="1"/>
</dbReference>
<dbReference type="PROSITE" id="PS00843">
    <property type="entry name" value="DALA_DALA_LIGASE_1"/>
    <property type="match status" value="1"/>
</dbReference>
<dbReference type="PROSITE" id="PS00844">
    <property type="entry name" value="DALA_DALA_LIGASE_2"/>
    <property type="match status" value="1"/>
</dbReference>
<protein>
    <recommendedName>
        <fullName evidence="2">D-alanine--D-alanine ligase</fullName>
        <ecNumber evidence="2">6.3.2.4</ecNumber>
    </recommendedName>
    <alternativeName>
        <fullName evidence="2">D-Ala-D-Ala ligase</fullName>
    </alternativeName>
    <alternativeName>
        <fullName evidence="2">D-alanylalanine synthetase</fullName>
    </alternativeName>
</protein>
<organism>
    <name type="scientific">Staphylococcus aureus (strain COL)</name>
    <dbReference type="NCBI Taxonomy" id="93062"/>
    <lineage>
        <taxon>Bacteria</taxon>
        <taxon>Bacillati</taxon>
        <taxon>Bacillota</taxon>
        <taxon>Bacilli</taxon>
        <taxon>Bacillales</taxon>
        <taxon>Staphylococcaceae</taxon>
        <taxon>Staphylococcus</taxon>
    </lineage>
</organism>
<sequence>MTKENICIVFGGKSAEHEVSILTAQNVLNAIDKDKYHVDIIYITNDGDWRKQNNITAEIKSTDELHLENGEALEISQLLKESSSGQPYDAVFPLLHGPNGEDGTIQGLFEVLDVPYVGNGVLSAASSMDKLVMKQLFEHRGLPQLPYISFLRSEYEKYEHNILKLVNDKLNYPVFVKPANLGSSVGISKCNNEAELKEGIKEAFQFDRKLVIEQGVNAREIEVAVLGNDYPEATWPGEVVKDVAFYDYKSKYKDGKVQLQIPADLDEDVQLTLRNMALEAFKATDCSGLVRADFFVTEDNQIYINETNAMPGFTAFSMYPKLWENMGLSYPELITKLIELAKERHQDKQKNKYKID</sequence>
<accession>Q5HEB7</accession>
<evidence type="ECO:0000250" key="1"/>
<evidence type="ECO:0000255" key="2">
    <source>
        <dbReference type="HAMAP-Rule" id="MF_00047"/>
    </source>
</evidence>
<evidence type="ECO:0007829" key="3">
    <source>
        <dbReference type="PDB" id="2I87"/>
    </source>
</evidence>
<evidence type="ECO:0007829" key="4">
    <source>
        <dbReference type="PDB" id="3N8D"/>
    </source>
</evidence>
<reference key="1">
    <citation type="journal article" date="2005" name="J. Bacteriol.">
        <title>Insights on evolution of virulence and resistance from the complete genome analysis of an early methicillin-resistant Staphylococcus aureus strain and a biofilm-producing methicillin-resistant Staphylococcus epidermidis strain.</title>
        <authorList>
            <person name="Gill S.R."/>
            <person name="Fouts D.E."/>
            <person name="Archer G.L."/>
            <person name="Mongodin E.F."/>
            <person name="DeBoy R.T."/>
            <person name="Ravel J."/>
            <person name="Paulsen I.T."/>
            <person name="Kolonay J.F."/>
            <person name="Brinkac L.M."/>
            <person name="Beanan M.J."/>
            <person name="Dodson R.J."/>
            <person name="Daugherty S.C."/>
            <person name="Madupu R."/>
            <person name="Angiuoli S.V."/>
            <person name="Durkin A.S."/>
            <person name="Haft D.H."/>
            <person name="Vamathevan J.J."/>
            <person name="Khouri H."/>
            <person name="Utterback T.R."/>
            <person name="Lee C."/>
            <person name="Dimitrov G."/>
            <person name="Jiang L."/>
            <person name="Qin H."/>
            <person name="Weidman J."/>
            <person name="Tran K."/>
            <person name="Kang K.H."/>
            <person name="Hance I.R."/>
            <person name="Nelson K.E."/>
            <person name="Fraser C.M."/>
        </authorList>
    </citation>
    <scope>NUCLEOTIDE SEQUENCE [LARGE SCALE GENOMIC DNA]</scope>
    <source>
        <strain>COL</strain>
    </source>
</reference>
<keyword id="KW-0002">3D-structure</keyword>
<keyword id="KW-0067">ATP-binding</keyword>
<keyword id="KW-0133">Cell shape</keyword>
<keyword id="KW-0961">Cell wall biogenesis/degradation</keyword>
<keyword id="KW-0963">Cytoplasm</keyword>
<keyword id="KW-0436">Ligase</keyword>
<keyword id="KW-0460">Magnesium</keyword>
<keyword id="KW-0464">Manganese</keyword>
<keyword id="KW-0479">Metal-binding</keyword>
<keyword id="KW-0547">Nucleotide-binding</keyword>
<keyword id="KW-0573">Peptidoglycan synthesis</keyword>
<gene>
    <name evidence="2" type="primary">ddl</name>
    <name type="ordered locus">SACOL2074</name>
</gene>
<proteinExistence type="evidence at protein level"/>
<feature type="chain" id="PRO_0000177874" description="D-alanine--D-alanine ligase">
    <location>
        <begin position="1"/>
        <end position="356"/>
    </location>
</feature>
<feature type="domain" description="ATP-grasp" evidence="2">
    <location>
        <begin position="134"/>
        <end position="339"/>
    </location>
</feature>
<feature type="binding site" evidence="2">
    <location>
        <begin position="167"/>
        <end position="222"/>
    </location>
    <ligand>
        <name>ATP</name>
        <dbReference type="ChEBI" id="CHEBI:30616"/>
    </ligand>
</feature>
<feature type="binding site" evidence="2">
    <location>
        <position position="293"/>
    </location>
    <ligand>
        <name>Mg(2+)</name>
        <dbReference type="ChEBI" id="CHEBI:18420"/>
        <label>1</label>
    </ligand>
</feature>
<feature type="binding site" evidence="2">
    <location>
        <position position="306"/>
    </location>
    <ligand>
        <name>Mg(2+)</name>
        <dbReference type="ChEBI" id="CHEBI:18420"/>
        <label>1</label>
    </ligand>
</feature>
<feature type="binding site" evidence="2">
    <location>
        <position position="306"/>
    </location>
    <ligand>
        <name>Mg(2+)</name>
        <dbReference type="ChEBI" id="CHEBI:18420"/>
        <label>2</label>
    </ligand>
</feature>
<feature type="binding site" evidence="2">
    <location>
        <position position="308"/>
    </location>
    <ligand>
        <name>Mg(2+)</name>
        <dbReference type="ChEBI" id="CHEBI:18420"/>
        <label>2</label>
    </ligand>
</feature>
<feature type="strand" evidence="3">
    <location>
        <begin position="4"/>
        <end position="11"/>
    </location>
</feature>
<feature type="strand" evidence="3">
    <location>
        <begin position="13"/>
        <end position="15"/>
    </location>
</feature>
<feature type="helix" evidence="3">
    <location>
        <begin position="17"/>
        <end position="29"/>
    </location>
</feature>
<feature type="turn" evidence="3">
    <location>
        <begin position="33"/>
        <end position="35"/>
    </location>
</feature>
<feature type="strand" evidence="3">
    <location>
        <begin position="36"/>
        <end position="43"/>
    </location>
</feature>
<feature type="strand" evidence="3">
    <location>
        <begin position="49"/>
        <end position="52"/>
    </location>
</feature>
<feature type="helix" evidence="3">
    <location>
        <begin position="62"/>
        <end position="64"/>
    </location>
</feature>
<feature type="helix" evidence="3">
    <location>
        <begin position="67"/>
        <end position="69"/>
    </location>
</feature>
<feature type="strand" evidence="3">
    <location>
        <begin position="70"/>
        <end position="73"/>
    </location>
</feature>
<feature type="helix" evidence="3">
    <location>
        <begin position="77"/>
        <end position="80"/>
    </location>
</feature>
<feature type="strand" evidence="3">
    <location>
        <begin position="85"/>
        <end position="87"/>
    </location>
</feature>
<feature type="strand" evidence="3">
    <location>
        <begin position="89"/>
        <end position="94"/>
    </location>
</feature>
<feature type="strand" evidence="3">
    <location>
        <begin position="98"/>
        <end position="100"/>
    </location>
</feature>
<feature type="helix" evidence="3">
    <location>
        <begin position="104"/>
        <end position="112"/>
    </location>
</feature>
<feature type="strand" evidence="3">
    <location>
        <begin position="116"/>
        <end position="118"/>
    </location>
</feature>
<feature type="helix" evidence="3">
    <location>
        <begin position="121"/>
        <end position="128"/>
    </location>
</feature>
<feature type="helix" evidence="3">
    <location>
        <begin position="130"/>
        <end position="140"/>
    </location>
</feature>
<feature type="strand" evidence="3">
    <location>
        <begin position="147"/>
        <end position="151"/>
    </location>
</feature>
<feature type="helix" evidence="3">
    <location>
        <begin position="152"/>
        <end position="169"/>
    </location>
</feature>
<feature type="strand" evidence="3">
    <location>
        <begin position="172"/>
        <end position="180"/>
    </location>
</feature>
<feature type="strand" evidence="4">
    <location>
        <begin position="182"/>
        <end position="184"/>
    </location>
</feature>
<feature type="strand" evidence="3">
    <location>
        <begin position="188"/>
        <end position="192"/>
    </location>
</feature>
<feature type="helix" evidence="3">
    <location>
        <begin position="193"/>
        <end position="204"/>
    </location>
</feature>
<feature type="strand" evidence="3">
    <location>
        <begin position="208"/>
        <end position="214"/>
    </location>
</feature>
<feature type="strand" evidence="3">
    <location>
        <begin position="219"/>
        <end position="230"/>
    </location>
</feature>
<feature type="strand" evidence="3">
    <location>
        <begin position="237"/>
        <end position="239"/>
    </location>
</feature>
<feature type="strand" evidence="3">
    <location>
        <begin position="259"/>
        <end position="262"/>
    </location>
</feature>
<feature type="helix" evidence="3">
    <location>
        <begin position="267"/>
        <end position="283"/>
    </location>
</feature>
<feature type="strand" evidence="3">
    <location>
        <begin position="288"/>
        <end position="296"/>
    </location>
</feature>
<feature type="strand" evidence="3">
    <location>
        <begin position="302"/>
        <end position="310"/>
    </location>
</feature>
<feature type="helix" evidence="3">
    <location>
        <begin position="318"/>
        <end position="325"/>
    </location>
</feature>
<feature type="helix" evidence="3">
    <location>
        <begin position="330"/>
        <end position="356"/>
    </location>
</feature>